<comment type="function">
    <text evidence="1">Could be involved in insertion of integral membrane proteins into the membrane.</text>
</comment>
<comment type="subcellular location">
    <subcellularLocation>
        <location evidence="1">Cell membrane</location>
        <topology evidence="1">Peripheral membrane protein</topology>
        <orientation evidence="1">Cytoplasmic side</orientation>
    </subcellularLocation>
</comment>
<comment type="similarity">
    <text evidence="1">Belongs to the UPF0161 family.</text>
</comment>
<gene>
    <name type="ordered locus">Daud_2236</name>
</gene>
<feature type="chain" id="PRO_1000205781" description="Putative membrane protein insertion efficiency factor">
    <location>
        <begin position="1"/>
        <end position="71"/>
    </location>
</feature>
<dbReference type="EMBL" id="CP000860">
    <property type="protein sequence ID" value="ACA60723.1"/>
    <property type="molecule type" value="Genomic_DNA"/>
</dbReference>
<dbReference type="RefSeq" id="WP_012303297.1">
    <property type="nucleotide sequence ID" value="NC_010424.1"/>
</dbReference>
<dbReference type="STRING" id="477974.Daud_2236"/>
<dbReference type="KEGG" id="dau:Daud_2236"/>
<dbReference type="eggNOG" id="COG0759">
    <property type="taxonomic scope" value="Bacteria"/>
</dbReference>
<dbReference type="HOGENOM" id="CLU_144811_5_2_9"/>
<dbReference type="OrthoDB" id="9801753at2"/>
<dbReference type="Proteomes" id="UP000008544">
    <property type="component" value="Chromosome"/>
</dbReference>
<dbReference type="GO" id="GO:0005886">
    <property type="term" value="C:plasma membrane"/>
    <property type="evidence" value="ECO:0007669"/>
    <property type="project" value="UniProtKB-SubCell"/>
</dbReference>
<dbReference type="HAMAP" id="MF_00386">
    <property type="entry name" value="UPF0161_YidD"/>
    <property type="match status" value="1"/>
</dbReference>
<dbReference type="InterPro" id="IPR002696">
    <property type="entry name" value="Membr_insert_effic_factor_YidD"/>
</dbReference>
<dbReference type="NCBIfam" id="TIGR00278">
    <property type="entry name" value="membrane protein insertion efficiency factor YidD"/>
    <property type="match status" value="1"/>
</dbReference>
<dbReference type="PANTHER" id="PTHR33383">
    <property type="entry name" value="MEMBRANE PROTEIN INSERTION EFFICIENCY FACTOR-RELATED"/>
    <property type="match status" value="1"/>
</dbReference>
<dbReference type="PANTHER" id="PTHR33383:SF1">
    <property type="entry name" value="MEMBRANE PROTEIN INSERTION EFFICIENCY FACTOR-RELATED"/>
    <property type="match status" value="1"/>
</dbReference>
<dbReference type="Pfam" id="PF01809">
    <property type="entry name" value="YidD"/>
    <property type="match status" value="1"/>
</dbReference>
<dbReference type="SMART" id="SM01234">
    <property type="entry name" value="Haemolytic"/>
    <property type="match status" value="1"/>
</dbReference>
<reference key="1">
    <citation type="submission" date="2007-10" db="EMBL/GenBank/DDBJ databases">
        <title>Complete sequence of chromosome of Desulforudis audaxviator MP104C.</title>
        <authorList>
            <person name="Copeland A."/>
            <person name="Lucas S."/>
            <person name="Lapidus A."/>
            <person name="Barry K."/>
            <person name="Glavina del Rio T."/>
            <person name="Dalin E."/>
            <person name="Tice H."/>
            <person name="Bruce D."/>
            <person name="Pitluck S."/>
            <person name="Lowry S.R."/>
            <person name="Larimer F."/>
            <person name="Land M.L."/>
            <person name="Hauser L."/>
            <person name="Kyrpides N."/>
            <person name="Ivanova N.N."/>
            <person name="Richardson P."/>
        </authorList>
    </citation>
    <scope>NUCLEOTIDE SEQUENCE [LARGE SCALE GENOMIC DNA]</scope>
    <source>
        <strain>MP104C</strain>
    </source>
</reference>
<evidence type="ECO:0000255" key="1">
    <source>
        <dbReference type="HAMAP-Rule" id="MF_00386"/>
    </source>
</evidence>
<sequence length="71" mass="7853">MSRPQKLAIGLIKGYQVAISPFFPSTCRFYPTCSEYAVQAIGKYGLMRGGLRAVRRVLRCHPFSPGGYDPA</sequence>
<name>YIDD_DESAP</name>
<keyword id="KW-1003">Cell membrane</keyword>
<keyword id="KW-0472">Membrane</keyword>
<keyword id="KW-1185">Reference proteome</keyword>
<protein>
    <recommendedName>
        <fullName evidence="1">Putative membrane protein insertion efficiency factor</fullName>
    </recommendedName>
</protein>
<organism>
    <name type="scientific">Desulforudis audaxviator (strain MP104C)</name>
    <dbReference type="NCBI Taxonomy" id="477974"/>
    <lineage>
        <taxon>Bacteria</taxon>
        <taxon>Bacillati</taxon>
        <taxon>Bacillota</taxon>
        <taxon>Clostridia</taxon>
        <taxon>Thermoanaerobacterales</taxon>
        <taxon>Candidatus Desulforudaceae</taxon>
        <taxon>Candidatus Desulforudis</taxon>
    </lineage>
</organism>
<accession>B1I6S5</accession>
<proteinExistence type="inferred from homology"/>